<comment type="function">
    <text>Subunit of the integral membrane V0 complex of vacuolar ATPase. Vacuolar ATPase is responsible for acidifying a variety of intracellular compartments in eukaryotic cells, thus providing most of the energy required for transport processes in the vacuolar system.</text>
</comment>
<comment type="subunit">
    <text>V-ATPase is a heteromultimeric enzyme composed of a peripheral catalytic V1 complex (components A to H) attached to an integral membrane V0 proton pore complex (components: a, c, c', c'' and d).</text>
</comment>
<comment type="similarity">
    <text evidence="1">Belongs to the V-ATPase V0D/AC39 subunit family.</text>
</comment>
<gene>
    <name type="ordered locus">Os01g0587000</name>
    <name type="ordered locus">LOC_Os01g40470</name>
    <name evidence="2" type="ORF">OsJ_02396</name>
    <name type="ORF">P0700A11.10</name>
</gene>
<organism>
    <name type="scientific">Oryza sativa subsp. japonica</name>
    <name type="common">Rice</name>
    <dbReference type="NCBI Taxonomy" id="39947"/>
    <lineage>
        <taxon>Eukaryota</taxon>
        <taxon>Viridiplantae</taxon>
        <taxon>Streptophyta</taxon>
        <taxon>Embryophyta</taxon>
        <taxon>Tracheophyta</taxon>
        <taxon>Spermatophyta</taxon>
        <taxon>Magnoliopsida</taxon>
        <taxon>Liliopsida</taxon>
        <taxon>Poales</taxon>
        <taxon>Poaceae</taxon>
        <taxon>BOP clade</taxon>
        <taxon>Oryzoideae</taxon>
        <taxon>Oryzeae</taxon>
        <taxon>Oryzinae</taxon>
        <taxon>Oryza</taxon>
        <taxon>Oryza sativa</taxon>
    </lineage>
</organism>
<protein>
    <recommendedName>
        <fullName>Probable V-type proton ATPase subunit d</fullName>
        <shortName>V-ATPase subunit d</shortName>
    </recommendedName>
    <alternativeName>
        <fullName>Vacuolar proton pump subunit d</fullName>
    </alternativeName>
</protein>
<accession>Q8RU33</accession>
<accession>Q0JLN5</accession>
<sequence length="351" mass="40785">MYGWEMLSFNIHDGFLEAIVRGNRSGLLTAADYNNLCQCENLDDVKMHLTATEYGPYLQNEPSPLHTTTIVEKCTLKLVDEYKHMMCQATEPLSTFLQYITYGHMIDNVVLIVTGTLHERDVNELLEKCHPLGMFDSIASLAVAQNMRELYRLVLVDTPLAPYFSECITSEDLDDMNIEIMRNTLYKAYLEDFYKFCEKLGGATAEIMCDLLSFEADRRAVNITINSIGTELTRDDRRKLYSNFGLLYPYGHEELAVCEDVDQVRGVMEKYPPYQAIFAKISYGESQMLDKAFYEEEVRRLCLSFEQQFHYAVFFAYIRLREQEIRNLMWISECVAQNQKNRVHDSVVFIF</sequence>
<feature type="chain" id="PRO_0000247628" description="Probable V-type proton ATPase subunit d">
    <location>
        <begin position="1"/>
        <end position="351"/>
    </location>
</feature>
<proteinExistence type="evidence at transcript level"/>
<evidence type="ECO:0000305" key="1"/>
<evidence type="ECO:0000312" key="2">
    <source>
        <dbReference type="EMBL" id="EEE54888.1"/>
    </source>
</evidence>
<dbReference type="EMBL" id="AP003300">
    <property type="protein sequence ID" value="BAB89911.1"/>
    <property type="molecule type" value="Genomic_DNA"/>
</dbReference>
<dbReference type="EMBL" id="AP008207">
    <property type="protein sequence ID" value="BAF05343.1"/>
    <property type="molecule type" value="Genomic_DNA"/>
</dbReference>
<dbReference type="EMBL" id="AP014957">
    <property type="protein sequence ID" value="BAS72912.1"/>
    <property type="molecule type" value="Genomic_DNA"/>
</dbReference>
<dbReference type="EMBL" id="CM000138">
    <property type="protein sequence ID" value="EEE54888.1"/>
    <property type="molecule type" value="Genomic_DNA"/>
</dbReference>
<dbReference type="EMBL" id="AK067605">
    <property type="protein sequence ID" value="BAG90498.1"/>
    <property type="molecule type" value="mRNA"/>
</dbReference>
<dbReference type="RefSeq" id="XP_015622221.1">
    <property type="nucleotide sequence ID" value="XM_015766735.1"/>
</dbReference>
<dbReference type="SMR" id="Q8RU33"/>
<dbReference type="FunCoup" id="Q8RU33">
    <property type="interactions" value="2999"/>
</dbReference>
<dbReference type="STRING" id="39947.Q8RU33"/>
<dbReference type="PaxDb" id="39947-Q8RU33"/>
<dbReference type="EnsemblPlants" id="Os01t0587000-01">
    <property type="protein sequence ID" value="Os01t0587000-01"/>
    <property type="gene ID" value="Os01g0587000"/>
</dbReference>
<dbReference type="Gramene" id="Os01t0587000-01">
    <property type="protein sequence ID" value="Os01t0587000-01"/>
    <property type="gene ID" value="Os01g0587000"/>
</dbReference>
<dbReference type="KEGG" id="dosa:Os01g0587000"/>
<dbReference type="eggNOG" id="KOG2957">
    <property type="taxonomic scope" value="Eukaryota"/>
</dbReference>
<dbReference type="HOGENOM" id="CLU_051277_0_0_1"/>
<dbReference type="InParanoid" id="Q8RU33"/>
<dbReference type="OMA" id="MTYGYMI"/>
<dbReference type="OrthoDB" id="10250083at2759"/>
<dbReference type="Proteomes" id="UP000000763">
    <property type="component" value="Chromosome 1"/>
</dbReference>
<dbReference type="Proteomes" id="UP000007752">
    <property type="component" value="Chromosome 1"/>
</dbReference>
<dbReference type="Proteomes" id="UP000059680">
    <property type="component" value="Chromosome 1"/>
</dbReference>
<dbReference type="GO" id="GO:0033179">
    <property type="term" value="C:proton-transporting V-type ATPase, V0 domain"/>
    <property type="evidence" value="ECO:0007669"/>
    <property type="project" value="InterPro"/>
</dbReference>
<dbReference type="GO" id="GO:0016471">
    <property type="term" value="C:vacuolar proton-transporting V-type ATPase complex"/>
    <property type="evidence" value="ECO:0000318"/>
    <property type="project" value="GO_Central"/>
</dbReference>
<dbReference type="GO" id="GO:0046961">
    <property type="term" value="F:proton-transporting ATPase activity, rotational mechanism"/>
    <property type="evidence" value="ECO:0007669"/>
    <property type="project" value="InterPro"/>
</dbReference>
<dbReference type="GO" id="GO:0007035">
    <property type="term" value="P:vacuolar acidification"/>
    <property type="evidence" value="ECO:0000318"/>
    <property type="project" value="GO_Central"/>
</dbReference>
<dbReference type="GO" id="GO:0007034">
    <property type="term" value="P:vacuolar transport"/>
    <property type="evidence" value="ECO:0000318"/>
    <property type="project" value="GO_Central"/>
</dbReference>
<dbReference type="FunFam" id="1.10.132.50:FF:000002">
    <property type="entry name" value="V-type proton ATPase subunit"/>
    <property type="match status" value="1"/>
</dbReference>
<dbReference type="FunFam" id="1.20.1690.10:FF:000001">
    <property type="entry name" value="V-type proton ATPase subunit"/>
    <property type="match status" value="1"/>
</dbReference>
<dbReference type="FunFam" id="1.20.1690.10:FF:000003">
    <property type="entry name" value="V-type proton ATPase subunit"/>
    <property type="match status" value="1"/>
</dbReference>
<dbReference type="Gene3D" id="1.10.132.50">
    <property type="entry name" value="ATP synthase (C/AC39) subunit, domain 3"/>
    <property type="match status" value="1"/>
</dbReference>
<dbReference type="Gene3D" id="1.20.1690.10">
    <property type="entry name" value="V-type ATP synthase subunit C domain"/>
    <property type="match status" value="2"/>
</dbReference>
<dbReference type="InterPro" id="IPR036079">
    <property type="entry name" value="ATPase_csu/dsu_sf"/>
</dbReference>
<dbReference type="InterPro" id="IPR002843">
    <property type="entry name" value="ATPase_V0-cplx_csu/dsu"/>
</dbReference>
<dbReference type="InterPro" id="IPR016727">
    <property type="entry name" value="ATPase_V0-cplx_dsu"/>
</dbReference>
<dbReference type="InterPro" id="IPR035067">
    <property type="entry name" value="V-type_ATPase_csu/dsu"/>
</dbReference>
<dbReference type="InterPro" id="IPR044911">
    <property type="entry name" value="V-type_ATPase_csu/dsu_dom_3"/>
</dbReference>
<dbReference type="PANTHER" id="PTHR11028">
    <property type="entry name" value="VACUOLAR ATP SYNTHASE SUBUNIT AC39"/>
    <property type="match status" value="1"/>
</dbReference>
<dbReference type="Pfam" id="PF01992">
    <property type="entry name" value="vATP-synt_AC39"/>
    <property type="match status" value="1"/>
</dbReference>
<dbReference type="PIRSF" id="PIRSF018497">
    <property type="entry name" value="V-ATP_synth_D"/>
    <property type="match status" value="1"/>
</dbReference>
<dbReference type="SUPFAM" id="SSF103486">
    <property type="entry name" value="V-type ATP synthase subunit C"/>
    <property type="match status" value="1"/>
</dbReference>
<keyword id="KW-0375">Hydrogen ion transport</keyword>
<keyword id="KW-0406">Ion transport</keyword>
<keyword id="KW-1185">Reference proteome</keyword>
<keyword id="KW-0813">Transport</keyword>
<reference key="1">
    <citation type="journal article" date="2002" name="Nature">
        <title>The genome sequence and structure of rice chromosome 1.</title>
        <authorList>
            <person name="Sasaki T."/>
            <person name="Matsumoto T."/>
            <person name="Yamamoto K."/>
            <person name="Sakata K."/>
            <person name="Baba T."/>
            <person name="Katayose Y."/>
            <person name="Wu J."/>
            <person name="Niimura Y."/>
            <person name="Cheng Z."/>
            <person name="Nagamura Y."/>
            <person name="Antonio B.A."/>
            <person name="Kanamori H."/>
            <person name="Hosokawa S."/>
            <person name="Masukawa M."/>
            <person name="Arikawa K."/>
            <person name="Chiden Y."/>
            <person name="Hayashi M."/>
            <person name="Okamoto M."/>
            <person name="Ando T."/>
            <person name="Aoki H."/>
            <person name="Arita K."/>
            <person name="Hamada M."/>
            <person name="Harada C."/>
            <person name="Hijishita S."/>
            <person name="Honda M."/>
            <person name="Ichikawa Y."/>
            <person name="Idonuma A."/>
            <person name="Iijima M."/>
            <person name="Ikeda M."/>
            <person name="Ikeno M."/>
            <person name="Ito S."/>
            <person name="Ito T."/>
            <person name="Ito Y."/>
            <person name="Ito Y."/>
            <person name="Iwabuchi A."/>
            <person name="Kamiya K."/>
            <person name="Karasawa W."/>
            <person name="Katagiri S."/>
            <person name="Kikuta A."/>
            <person name="Kobayashi N."/>
            <person name="Kono I."/>
            <person name="Machita K."/>
            <person name="Maehara T."/>
            <person name="Mizuno H."/>
            <person name="Mizubayashi T."/>
            <person name="Mukai Y."/>
            <person name="Nagasaki H."/>
            <person name="Nakashima M."/>
            <person name="Nakama Y."/>
            <person name="Nakamichi Y."/>
            <person name="Nakamura M."/>
            <person name="Namiki N."/>
            <person name="Negishi M."/>
            <person name="Ohta I."/>
            <person name="Ono N."/>
            <person name="Saji S."/>
            <person name="Sakai K."/>
            <person name="Shibata M."/>
            <person name="Shimokawa T."/>
            <person name="Shomura A."/>
            <person name="Song J."/>
            <person name="Takazaki Y."/>
            <person name="Terasawa K."/>
            <person name="Tsuji K."/>
            <person name="Waki K."/>
            <person name="Yamagata H."/>
            <person name="Yamane H."/>
            <person name="Yoshiki S."/>
            <person name="Yoshihara R."/>
            <person name="Yukawa K."/>
            <person name="Zhong H."/>
            <person name="Iwama H."/>
            <person name="Endo T."/>
            <person name="Ito H."/>
            <person name="Hahn J.H."/>
            <person name="Kim H.-I."/>
            <person name="Eun M.-Y."/>
            <person name="Yano M."/>
            <person name="Jiang J."/>
            <person name="Gojobori T."/>
        </authorList>
    </citation>
    <scope>NUCLEOTIDE SEQUENCE [LARGE SCALE GENOMIC DNA]</scope>
    <source>
        <strain>cv. Nipponbare</strain>
    </source>
</reference>
<reference key="2">
    <citation type="journal article" date="2005" name="Nature">
        <title>The map-based sequence of the rice genome.</title>
        <authorList>
            <consortium name="International rice genome sequencing project (IRGSP)"/>
        </authorList>
    </citation>
    <scope>NUCLEOTIDE SEQUENCE [LARGE SCALE GENOMIC DNA]</scope>
    <source>
        <strain>cv. Nipponbare</strain>
    </source>
</reference>
<reference key="3">
    <citation type="journal article" date="2008" name="Nucleic Acids Res.">
        <title>The rice annotation project database (RAP-DB): 2008 update.</title>
        <authorList>
            <consortium name="The rice annotation project (RAP)"/>
        </authorList>
    </citation>
    <scope>GENOME REANNOTATION</scope>
    <source>
        <strain>cv. Nipponbare</strain>
    </source>
</reference>
<reference key="4">
    <citation type="journal article" date="2013" name="Rice">
        <title>Improvement of the Oryza sativa Nipponbare reference genome using next generation sequence and optical map data.</title>
        <authorList>
            <person name="Kawahara Y."/>
            <person name="de la Bastide M."/>
            <person name="Hamilton J.P."/>
            <person name="Kanamori H."/>
            <person name="McCombie W.R."/>
            <person name="Ouyang S."/>
            <person name="Schwartz D.C."/>
            <person name="Tanaka T."/>
            <person name="Wu J."/>
            <person name="Zhou S."/>
            <person name="Childs K.L."/>
            <person name="Davidson R.M."/>
            <person name="Lin H."/>
            <person name="Quesada-Ocampo L."/>
            <person name="Vaillancourt B."/>
            <person name="Sakai H."/>
            <person name="Lee S.S."/>
            <person name="Kim J."/>
            <person name="Numa H."/>
            <person name="Itoh T."/>
            <person name="Buell C.R."/>
            <person name="Matsumoto T."/>
        </authorList>
    </citation>
    <scope>GENOME REANNOTATION</scope>
    <source>
        <strain>cv. Nipponbare</strain>
    </source>
</reference>
<reference key="5">
    <citation type="journal article" date="2005" name="PLoS Biol.">
        <title>The genomes of Oryza sativa: a history of duplications.</title>
        <authorList>
            <person name="Yu J."/>
            <person name="Wang J."/>
            <person name="Lin W."/>
            <person name="Li S."/>
            <person name="Li H."/>
            <person name="Zhou J."/>
            <person name="Ni P."/>
            <person name="Dong W."/>
            <person name="Hu S."/>
            <person name="Zeng C."/>
            <person name="Zhang J."/>
            <person name="Zhang Y."/>
            <person name="Li R."/>
            <person name="Xu Z."/>
            <person name="Li S."/>
            <person name="Li X."/>
            <person name="Zheng H."/>
            <person name="Cong L."/>
            <person name="Lin L."/>
            <person name="Yin J."/>
            <person name="Geng J."/>
            <person name="Li G."/>
            <person name="Shi J."/>
            <person name="Liu J."/>
            <person name="Lv H."/>
            <person name="Li J."/>
            <person name="Wang J."/>
            <person name="Deng Y."/>
            <person name="Ran L."/>
            <person name="Shi X."/>
            <person name="Wang X."/>
            <person name="Wu Q."/>
            <person name="Li C."/>
            <person name="Ren X."/>
            <person name="Wang J."/>
            <person name="Wang X."/>
            <person name="Li D."/>
            <person name="Liu D."/>
            <person name="Zhang X."/>
            <person name="Ji Z."/>
            <person name="Zhao W."/>
            <person name="Sun Y."/>
            <person name="Zhang Z."/>
            <person name="Bao J."/>
            <person name="Han Y."/>
            <person name="Dong L."/>
            <person name="Ji J."/>
            <person name="Chen P."/>
            <person name="Wu S."/>
            <person name="Liu J."/>
            <person name="Xiao Y."/>
            <person name="Bu D."/>
            <person name="Tan J."/>
            <person name="Yang L."/>
            <person name="Ye C."/>
            <person name="Zhang J."/>
            <person name="Xu J."/>
            <person name="Zhou Y."/>
            <person name="Yu Y."/>
            <person name="Zhang B."/>
            <person name="Zhuang S."/>
            <person name="Wei H."/>
            <person name="Liu B."/>
            <person name="Lei M."/>
            <person name="Yu H."/>
            <person name="Li Y."/>
            <person name="Xu H."/>
            <person name="Wei S."/>
            <person name="He X."/>
            <person name="Fang L."/>
            <person name="Zhang Z."/>
            <person name="Zhang Y."/>
            <person name="Huang X."/>
            <person name="Su Z."/>
            <person name="Tong W."/>
            <person name="Li J."/>
            <person name="Tong Z."/>
            <person name="Li S."/>
            <person name="Ye J."/>
            <person name="Wang L."/>
            <person name="Fang L."/>
            <person name="Lei T."/>
            <person name="Chen C.-S."/>
            <person name="Chen H.-C."/>
            <person name="Xu Z."/>
            <person name="Li H."/>
            <person name="Huang H."/>
            <person name="Zhang F."/>
            <person name="Xu H."/>
            <person name="Li N."/>
            <person name="Zhao C."/>
            <person name="Li S."/>
            <person name="Dong L."/>
            <person name="Huang Y."/>
            <person name="Li L."/>
            <person name="Xi Y."/>
            <person name="Qi Q."/>
            <person name="Li W."/>
            <person name="Zhang B."/>
            <person name="Hu W."/>
            <person name="Zhang Y."/>
            <person name="Tian X."/>
            <person name="Jiao Y."/>
            <person name="Liang X."/>
            <person name="Jin J."/>
            <person name="Gao L."/>
            <person name="Zheng W."/>
            <person name="Hao B."/>
            <person name="Liu S.-M."/>
            <person name="Wang W."/>
            <person name="Yuan L."/>
            <person name="Cao M."/>
            <person name="McDermott J."/>
            <person name="Samudrala R."/>
            <person name="Wang J."/>
            <person name="Wong G.K.-S."/>
            <person name="Yang H."/>
        </authorList>
    </citation>
    <scope>NUCLEOTIDE SEQUENCE [LARGE SCALE GENOMIC DNA]</scope>
    <source>
        <strain>cv. Nipponbare</strain>
    </source>
</reference>
<reference key="6">
    <citation type="journal article" date="2003" name="Science">
        <title>Collection, mapping, and annotation of over 28,000 cDNA clones from japonica rice.</title>
        <authorList>
            <consortium name="The rice full-length cDNA consortium"/>
        </authorList>
    </citation>
    <scope>NUCLEOTIDE SEQUENCE [LARGE SCALE MRNA]</scope>
    <source>
        <strain>cv. Nipponbare</strain>
    </source>
</reference>
<name>VA0D_ORYSJ</name>